<sequence>MANPLYHKHIISINDLSRDELELVLRTAASLKKTPQPELLKHKVIASCFFEASTRTRLSFETSIHRLGASVVGFSDSSNTSLGKKGETLADTMSVISTYVDAIVMRHPQEGASRLAAQFSGNVPIVNAGDGANQHPTQTLLDLFTIQETQGRLDNINIAMVGDLKYGRTVHSLTQALAKFNGNRFFFIAPDALAMPAYILQMLEEKEIEYSLHESLEEVVPELDILYMTRVQKERLDPSEYANVKAQFILRSSDLTGARDNLKVLHPLPRIDEITTDVDKTPYAYYFQQAGNGIFARQALLALVLNAELAL</sequence>
<dbReference type="EC" id="2.1.3.2" evidence="1"/>
<dbReference type="EMBL" id="CP000950">
    <property type="protein sequence ID" value="ACA66803.1"/>
    <property type="molecule type" value="Genomic_DNA"/>
</dbReference>
<dbReference type="RefSeq" id="WP_012104413.1">
    <property type="nucleotide sequence ID" value="NZ_CP009792.1"/>
</dbReference>
<dbReference type="SMR" id="B1JKJ8"/>
<dbReference type="GeneID" id="49784482"/>
<dbReference type="KEGG" id="ypy:YPK_0500"/>
<dbReference type="PATRIC" id="fig|502800.11.peg.1110"/>
<dbReference type="UniPathway" id="UPA00070">
    <property type="reaction ID" value="UER00116"/>
</dbReference>
<dbReference type="GO" id="GO:0005829">
    <property type="term" value="C:cytosol"/>
    <property type="evidence" value="ECO:0007669"/>
    <property type="project" value="TreeGrafter"/>
</dbReference>
<dbReference type="GO" id="GO:0016597">
    <property type="term" value="F:amino acid binding"/>
    <property type="evidence" value="ECO:0007669"/>
    <property type="project" value="InterPro"/>
</dbReference>
<dbReference type="GO" id="GO:0004070">
    <property type="term" value="F:aspartate carbamoyltransferase activity"/>
    <property type="evidence" value="ECO:0007669"/>
    <property type="project" value="UniProtKB-UniRule"/>
</dbReference>
<dbReference type="GO" id="GO:0006207">
    <property type="term" value="P:'de novo' pyrimidine nucleobase biosynthetic process"/>
    <property type="evidence" value="ECO:0007669"/>
    <property type="project" value="InterPro"/>
</dbReference>
<dbReference type="GO" id="GO:0044205">
    <property type="term" value="P:'de novo' UMP biosynthetic process"/>
    <property type="evidence" value="ECO:0007669"/>
    <property type="project" value="UniProtKB-UniRule"/>
</dbReference>
<dbReference type="GO" id="GO:0006520">
    <property type="term" value="P:amino acid metabolic process"/>
    <property type="evidence" value="ECO:0007669"/>
    <property type="project" value="InterPro"/>
</dbReference>
<dbReference type="FunFam" id="3.40.50.1370:FF:000001">
    <property type="entry name" value="Aspartate carbamoyltransferase"/>
    <property type="match status" value="1"/>
</dbReference>
<dbReference type="FunFam" id="3.40.50.1370:FF:000002">
    <property type="entry name" value="Aspartate carbamoyltransferase 2"/>
    <property type="match status" value="1"/>
</dbReference>
<dbReference type="Gene3D" id="3.40.50.1370">
    <property type="entry name" value="Aspartate/ornithine carbamoyltransferase"/>
    <property type="match status" value="2"/>
</dbReference>
<dbReference type="HAMAP" id="MF_00001">
    <property type="entry name" value="Asp_carb_tr"/>
    <property type="match status" value="1"/>
</dbReference>
<dbReference type="InterPro" id="IPR006132">
    <property type="entry name" value="Asp/Orn_carbamoyltranf_P-bd"/>
</dbReference>
<dbReference type="InterPro" id="IPR006130">
    <property type="entry name" value="Asp/Orn_carbamoylTrfase"/>
</dbReference>
<dbReference type="InterPro" id="IPR036901">
    <property type="entry name" value="Asp/Orn_carbamoylTrfase_sf"/>
</dbReference>
<dbReference type="InterPro" id="IPR002082">
    <property type="entry name" value="Asp_carbamoyltransf"/>
</dbReference>
<dbReference type="InterPro" id="IPR006131">
    <property type="entry name" value="Asp_carbamoyltransf_Asp/Orn-bd"/>
</dbReference>
<dbReference type="NCBIfam" id="TIGR00670">
    <property type="entry name" value="asp_carb_tr"/>
    <property type="match status" value="1"/>
</dbReference>
<dbReference type="NCBIfam" id="NF002032">
    <property type="entry name" value="PRK00856.1"/>
    <property type="match status" value="1"/>
</dbReference>
<dbReference type="PANTHER" id="PTHR45753:SF6">
    <property type="entry name" value="ASPARTATE CARBAMOYLTRANSFERASE"/>
    <property type="match status" value="1"/>
</dbReference>
<dbReference type="PANTHER" id="PTHR45753">
    <property type="entry name" value="ORNITHINE CARBAMOYLTRANSFERASE, MITOCHONDRIAL"/>
    <property type="match status" value="1"/>
</dbReference>
<dbReference type="Pfam" id="PF00185">
    <property type="entry name" value="OTCace"/>
    <property type="match status" value="1"/>
</dbReference>
<dbReference type="Pfam" id="PF02729">
    <property type="entry name" value="OTCace_N"/>
    <property type="match status" value="1"/>
</dbReference>
<dbReference type="PRINTS" id="PR00100">
    <property type="entry name" value="AOTCASE"/>
</dbReference>
<dbReference type="PRINTS" id="PR00101">
    <property type="entry name" value="ATCASE"/>
</dbReference>
<dbReference type="SUPFAM" id="SSF53671">
    <property type="entry name" value="Aspartate/ornithine carbamoyltransferase"/>
    <property type="match status" value="1"/>
</dbReference>
<dbReference type="PROSITE" id="PS00097">
    <property type="entry name" value="CARBAMOYLTRANSFERASE"/>
    <property type="match status" value="1"/>
</dbReference>
<organism>
    <name type="scientific">Yersinia pseudotuberculosis serotype O:3 (strain YPIII)</name>
    <dbReference type="NCBI Taxonomy" id="502800"/>
    <lineage>
        <taxon>Bacteria</taxon>
        <taxon>Pseudomonadati</taxon>
        <taxon>Pseudomonadota</taxon>
        <taxon>Gammaproteobacteria</taxon>
        <taxon>Enterobacterales</taxon>
        <taxon>Yersiniaceae</taxon>
        <taxon>Yersinia</taxon>
    </lineage>
</organism>
<accession>B1JKJ8</accession>
<reference key="1">
    <citation type="submission" date="2008-02" db="EMBL/GenBank/DDBJ databases">
        <title>Complete sequence of Yersinia pseudotuberculosis YPIII.</title>
        <authorList>
            <consortium name="US DOE Joint Genome Institute"/>
            <person name="Copeland A."/>
            <person name="Lucas S."/>
            <person name="Lapidus A."/>
            <person name="Glavina del Rio T."/>
            <person name="Dalin E."/>
            <person name="Tice H."/>
            <person name="Bruce D."/>
            <person name="Goodwin L."/>
            <person name="Pitluck S."/>
            <person name="Munk A.C."/>
            <person name="Brettin T."/>
            <person name="Detter J.C."/>
            <person name="Han C."/>
            <person name="Tapia R."/>
            <person name="Schmutz J."/>
            <person name="Larimer F."/>
            <person name="Land M."/>
            <person name="Hauser L."/>
            <person name="Challacombe J.F."/>
            <person name="Green L."/>
            <person name="Lindler L.E."/>
            <person name="Nikolich M.P."/>
            <person name="Richardson P."/>
        </authorList>
    </citation>
    <scope>NUCLEOTIDE SEQUENCE [LARGE SCALE GENOMIC DNA]</scope>
    <source>
        <strain>YPIII</strain>
    </source>
</reference>
<comment type="function">
    <text evidence="1">Catalyzes the condensation of carbamoyl phosphate and aspartate to form carbamoyl aspartate and inorganic phosphate, the committed step in the de novo pyrimidine nucleotide biosynthesis pathway.</text>
</comment>
<comment type="catalytic activity">
    <reaction evidence="1">
        <text>carbamoyl phosphate + L-aspartate = N-carbamoyl-L-aspartate + phosphate + H(+)</text>
        <dbReference type="Rhea" id="RHEA:20013"/>
        <dbReference type="ChEBI" id="CHEBI:15378"/>
        <dbReference type="ChEBI" id="CHEBI:29991"/>
        <dbReference type="ChEBI" id="CHEBI:32814"/>
        <dbReference type="ChEBI" id="CHEBI:43474"/>
        <dbReference type="ChEBI" id="CHEBI:58228"/>
        <dbReference type="EC" id="2.1.3.2"/>
    </reaction>
</comment>
<comment type="pathway">
    <text evidence="1">Pyrimidine metabolism; UMP biosynthesis via de novo pathway; (S)-dihydroorotate from bicarbonate: step 2/3.</text>
</comment>
<comment type="subunit">
    <text evidence="1">Heterododecamer (2C3:3R2) of six catalytic PyrB chains organized as two trimers (C3), and six regulatory PyrI chains organized as three dimers (R2).</text>
</comment>
<comment type="similarity">
    <text evidence="1">Belongs to the aspartate/ornithine carbamoyltransferase superfamily. ATCase family.</text>
</comment>
<keyword id="KW-0665">Pyrimidine biosynthesis</keyword>
<keyword id="KW-0808">Transferase</keyword>
<name>PYRB_YERPY</name>
<proteinExistence type="inferred from homology"/>
<protein>
    <recommendedName>
        <fullName evidence="1">Aspartate carbamoyltransferase catalytic subunit</fullName>
        <ecNumber evidence="1">2.1.3.2</ecNumber>
    </recommendedName>
    <alternativeName>
        <fullName evidence="1">Aspartate transcarbamylase</fullName>
        <shortName evidence="1">ATCase</shortName>
    </alternativeName>
</protein>
<evidence type="ECO:0000255" key="1">
    <source>
        <dbReference type="HAMAP-Rule" id="MF_00001"/>
    </source>
</evidence>
<gene>
    <name evidence="1" type="primary">pyrB</name>
    <name type="ordered locus">YPK_0500</name>
</gene>
<feature type="chain" id="PRO_1000088819" description="Aspartate carbamoyltransferase catalytic subunit">
    <location>
        <begin position="1"/>
        <end position="311"/>
    </location>
</feature>
<feature type="binding site" evidence="1">
    <location>
        <position position="55"/>
    </location>
    <ligand>
        <name>carbamoyl phosphate</name>
        <dbReference type="ChEBI" id="CHEBI:58228"/>
    </ligand>
</feature>
<feature type="binding site" evidence="1">
    <location>
        <position position="56"/>
    </location>
    <ligand>
        <name>carbamoyl phosphate</name>
        <dbReference type="ChEBI" id="CHEBI:58228"/>
    </ligand>
</feature>
<feature type="binding site" evidence="1">
    <location>
        <position position="85"/>
    </location>
    <ligand>
        <name>L-aspartate</name>
        <dbReference type="ChEBI" id="CHEBI:29991"/>
    </ligand>
</feature>
<feature type="binding site" evidence="1">
    <location>
        <position position="106"/>
    </location>
    <ligand>
        <name>carbamoyl phosphate</name>
        <dbReference type="ChEBI" id="CHEBI:58228"/>
    </ligand>
</feature>
<feature type="binding site" evidence="1">
    <location>
        <position position="135"/>
    </location>
    <ligand>
        <name>carbamoyl phosphate</name>
        <dbReference type="ChEBI" id="CHEBI:58228"/>
    </ligand>
</feature>
<feature type="binding site" evidence="1">
    <location>
        <position position="138"/>
    </location>
    <ligand>
        <name>carbamoyl phosphate</name>
        <dbReference type="ChEBI" id="CHEBI:58228"/>
    </ligand>
</feature>
<feature type="binding site" evidence="1">
    <location>
        <position position="168"/>
    </location>
    <ligand>
        <name>L-aspartate</name>
        <dbReference type="ChEBI" id="CHEBI:29991"/>
    </ligand>
</feature>
<feature type="binding site" evidence="1">
    <location>
        <position position="230"/>
    </location>
    <ligand>
        <name>L-aspartate</name>
        <dbReference type="ChEBI" id="CHEBI:29991"/>
    </ligand>
</feature>
<feature type="binding site" evidence="1">
    <location>
        <position position="268"/>
    </location>
    <ligand>
        <name>carbamoyl phosphate</name>
        <dbReference type="ChEBI" id="CHEBI:58228"/>
    </ligand>
</feature>
<feature type="binding site" evidence="1">
    <location>
        <position position="269"/>
    </location>
    <ligand>
        <name>carbamoyl phosphate</name>
        <dbReference type="ChEBI" id="CHEBI:58228"/>
    </ligand>
</feature>